<sequence length="400" mass="41736">MNFLRMSELSLTDKVVLIREDLNVPIKAGKVASDARLQASLPTIKMALEKGAAVIVCSHLGRPTEGNPEAIYSLAPVADYLSDKLSAPVTLNSDYFTQGVAIEAGEVVLLENVRFNEGEKKNDAALAQKYADLCDVFVMDAFGTAHRAQASTEGVTQAMHKAGKTACAGPLLAAELDALSLALETPAQPMLAIVGGSKVSTKLEVLHSLAELCSQIIVGGGIANTFLAAQGHSVGASLYEADLLDTAREIMGKTEILLPEYVVVADKSDIDFADFTGSLQQASATIKSVDTIGENDMILDIAPDSAIKLAEAITKAKTILWNGPVGVFEVDAFGQGTQIVAEAVKNSQGFSIAGGGDTLAAIDKYQVADGVSYMSTGGGAFLEFVEGKVLPAVAALEINA</sequence>
<gene>
    <name evidence="1" type="primary">pgk</name>
    <name type="ordered locus">Pcryo_0681</name>
</gene>
<accession>Q1QCY9</accession>
<feature type="chain" id="PRO_1000058044" description="Phosphoglycerate kinase">
    <location>
        <begin position="1"/>
        <end position="400"/>
    </location>
</feature>
<feature type="binding site" evidence="1">
    <location>
        <begin position="21"/>
        <end position="23"/>
    </location>
    <ligand>
        <name>substrate</name>
    </ligand>
</feature>
<feature type="binding site" evidence="1">
    <location>
        <position position="36"/>
    </location>
    <ligand>
        <name>substrate</name>
    </ligand>
</feature>
<feature type="binding site" evidence="1">
    <location>
        <begin position="59"/>
        <end position="62"/>
    </location>
    <ligand>
        <name>substrate</name>
    </ligand>
</feature>
<feature type="binding site" evidence="1">
    <location>
        <position position="114"/>
    </location>
    <ligand>
        <name>substrate</name>
    </ligand>
</feature>
<feature type="binding site" evidence="1">
    <location>
        <position position="147"/>
    </location>
    <ligand>
        <name>substrate</name>
    </ligand>
</feature>
<feature type="binding site" evidence="1">
    <location>
        <position position="202"/>
    </location>
    <ligand>
        <name>ATP</name>
        <dbReference type="ChEBI" id="CHEBI:30616"/>
    </ligand>
</feature>
<feature type="binding site" evidence="1">
    <location>
        <position position="329"/>
    </location>
    <ligand>
        <name>ATP</name>
        <dbReference type="ChEBI" id="CHEBI:30616"/>
    </ligand>
</feature>
<feature type="binding site" evidence="1">
    <location>
        <begin position="355"/>
        <end position="358"/>
    </location>
    <ligand>
        <name>ATP</name>
        <dbReference type="ChEBI" id="CHEBI:30616"/>
    </ligand>
</feature>
<comment type="catalytic activity">
    <reaction evidence="1">
        <text>(2R)-3-phosphoglycerate + ATP = (2R)-3-phospho-glyceroyl phosphate + ADP</text>
        <dbReference type="Rhea" id="RHEA:14801"/>
        <dbReference type="ChEBI" id="CHEBI:30616"/>
        <dbReference type="ChEBI" id="CHEBI:57604"/>
        <dbReference type="ChEBI" id="CHEBI:58272"/>
        <dbReference type="ChEBI" id="CHEBI:456216"/>
        <dbReference type="EC" id="2.7.2.3"/>
    </reaction>
</comment>
<comment type="pathway">
    <text evidence="1">Carbohydrate degradation; glycolysis; pyruvate from D-glyceraldehyde 3-phosphate: step 2/5.</text>
</comment>
<comment type="subunit">
    <text evidence="1">Monomer.</text>
</comment>
<comment type="subcellular location">
    <subcellularLocation>
        <location evidence="1">Cytoplasm</location>
    </subcellularLocation>
</comment>
<comment type="similarity">
    <text evidence="1">Belongs to the phosphoglycerate kinase family.</text>
</comment>
<organism>
    <name type="scientific">Psychrobacter cryohalolentis (strain ATCC BAA-1226 / DSM 17306 / VKM B-2378 / K5)</name>
    <dbReference type="NCBI Taxonomy" id="335284"/>
    <lineage>
        <taxon>Bacteria</taxon>
        <taxon>Pseudomonadati</taxon>
        <taxon>Pseudomonadota</taxon>
        <taxon>Gammaproteobacteria</taxon>
        <taxon>Moraxellales</taxon>
        <taxon>Moraxellaceae</taxon>
        <taxon>Psychrobacter</taxon>
    </lineage>
</organism>
<reference key="1">
    <citation type="submission" date="2006-03" db="EMBL/GenBank/DDBJ databases">
        <title>Complete sequence of chromosome of Psychrobacter cryohalolentis K5.</title>
        <authorList>
            <consortium name="US DOE Joint Genome Institute"/>
            <person name="Copeland A."/>
            <person name="Lucas S."/>
            <person name="Lapidus A."/>
            <person name="Barry K."/>
            <person name="Detter J.C."/>
            <person name="Glavina T."/>
            <person name="Hammon N."/>
            <person name="Israni S."/>
            <person name="Dalin E."/>
            <person name="Tice H."/>
            <person name="Pitluck S."/>
            <person name="Brettin T."/>
            <person name="Bruce D."/>
            <person name="Han C."/>
            <person name="Tapia R."/>
            <person name="Sims D.R."/>
            <person name="Gilna P."/>
            <person name="Schmutz J."/>
            <person name="Larimer F."/>
            <person name="Land M."/>
            <person name="Hauser L."/>
            <person name="Kyrpides N."/>
            <person name="Kim E."/>
            <person name="Richardson P."/>
        </authorList>
    </citation>
    <scope>NUCLEOTIDE SEQUENCE [LARGE SCALE GENOMIC DNA]</scope>
    <source>
        <strain>ATCC BAA-1226 / DSM 17306 / VKM B-2378 / K5</strain>
    </source>
</reference>
<protein>
    <recommendedName>
        <fullName evidence="1">Phosphoglycerate kinase</fullName>
        <ecNumber evidence="1">2.7.2.3</ecNumber>
    </recommendedName>
</protein>
<evidence type="ECO:0000255" key="1">
    <source>
        <dbReference type="HAMAP-Rule" id="MF_00145"/>
    </source>
</evidence>
<proteinExistence type="inferred from homology"/>
<keyword id="KW-0067">ATP-binding</keyword>
<keyword id="KW-0963">Cytoplasm</keyword>
<keyword id="KW-0324">Glycolysis</keyword>
<keyword id="KW-0418">Kinase</keyword>
<keyword id="KW-0547">Nucleotide-binding</keyword>
<keyword id="KW-0808">Transferase</keyword>
<name>PGK_PSYCK</name>
<dbReference type="EC" id="2.7.2.3" evidence="1"/>
<dbReference type="EMBL" id="CP000323">
    <property type="protein sequence ID" value="ABE74464.1"/>
    <property type="molecule type" value="Genomic_DNA"/>
</dbReference>
<dbReference type="RefSeq" id="WP_011513031.1">
    <property type="nucleotide sequence ID" value="NC_007969.1"/>
</dbReference>
<dbReference type="SMR" id="Q1QCY9"/>
<dbReference type="STRING" id="335284.Pcryo_0681"/>
<dbReference type="KEGG" id="pcr:Pcryo_0681"/>
<dbReference type="eggNOG" id="COG0126">
    <property type="taxonomic scope" value="Bacteria"/>
</dbReference>
<dbReference type="HOGENOM" id="CLU_025427_0_2_6"/>
<dbReference type="UniPathway" id="UPA00109">
    <property type="reaction ID" value="UER00185"/>
</dbReference>
<dbReference type="Proteomes" id="UP000002425">
    <property type="component" value="Chromosome"/>
</dbReference>
<dbReference type="GO" id="GO:0005829">
    <property type="term" value="C:cytosol"/>
    <property type="evidence" value="ECO:0007669"/>
    <property type="project" value="TreeGrafter"/>
</dbReference>
<dbReference type="GO" id="GO:0043531">
    <property type="term" value="F:ADP binding"/>
    <property type="evidence" value="ECO:0007669"/>
    <property type="project" value="TreeGrafter"/>
</dbReference>
<dbReference type="GO" id="GO:0005524">
    <property type="term" value="F:ATP binding"/>
    <property type="evidence" value="ECO:0007669"/>
    <property type="project" value="UniProtKB-KW"/>
</dbReference>
<dbReference type="GO" id="GO:0004618">
    <property type="term" value="F:phosphoglycerate kinase activity"/>
    <property type="evidence" value="ECO:0007669"/>
    <property type="project" value="UniProtKB-UniRule"/>
</dbReference>
<dbReference type="GO" id="GO:0006094">
    <property type="term" value="P:gluconeogenesis"/>
    <property type="evidence" value="ECO:0007669"/>
    <property type="project" value="TreeGrafter"/>
</dbReference>
<dbReference type="GO" id="GO:0006096">
    <property type="term" value="P:glycolytic process"/>
    <property type="evidence" value="ECO:0007669"/>
    <property type="project" value="UniProtKB-UniRule"/>
</dbReference>
<dbReference type="FunFam" id="3.40.50.1260:FF:000001">
    <property type="entry name" value="Phosphoglycerate kinase"/>
    <property type="match status" value="1"/>
</dbReference>
<dbReference type="FunFam" id="3.40.50.1260:FF:000002">
    <property type="entry name" value="Phosphoglycerate kinase"/>
    <property type="match status" value="1"/>
</dbReference>
<dbReference type="Gene3D" id="3.40.50.1260">
    <property type="entry name" value="Phosphoglycerate kinase, N-terminal domain"/>
    <property type="match status" value="2"/>
</dbReference>
<dbReference type="HAMAP" id="MF_00145">
    <property type="entry name" value="Phosphoglyc_kinase"/>
    <property type="match status" value="1"/>
</dbReference>
<dbReference type="InterPro" id="IPR001576">
    <property type="entry name" value="Phosphoglycerate_kinase"/>
</dbReference>
<dbReference type="InterPro" id="IPR015911">
    <property type="entry name" value="Phosphoglycerate_kinase_CS"/>
</dbReference>
<dbReference type="InterPro" id="IPR015824">
    <property type="entry name" value="Phosphoglycerate_kinase_N"/>
</dbReference>
<dbReference type="InterPro" id="IPR036043">
    <property type="entry name" value="Phosphoglycerate_kinase_sf"/>
</dbReference>
<dbReference type="PANTHER" id="PTHR11406">
    <property type="entry name" value="PHOSPHOGLYCERATE KINASE"/>
    <property type="match status" value="1"/>
</dbReference>
<dbReference type="PANTHER" id="PTHR11406:SF23">
    <property type="entry name" value="PHOSPHOGLYCERATE KINASE 1, CHLOROPLASTIC-RELATED"/>
    <property type="match status" value="1"/>
</dbReference>
<dbReference type="Pfam" id="PF00162">
    <property type="entry name" value="PGK"/>
    <property type="match status" value="1"/>
</dbReference>
<dbReference type="PIRSF" id="PIRSF000724">
    <property type="entry name" value="Pgk"/>
    <property type="match status" value="1"/>
</dbReference>
<dbReference type="PRINTS" id="PR00477">
    <property type="entry name" value="PHGLYCKINASE"/>
</dbReference>
<dbReference type="SUPFAM" id="SSF53748">
    <property type="entry name" value="Phosphoglycerate kinase"/>
    <property type="match status" value="1"/>
</dbReference>
<dbReference type="PROSITE" id="PS00111">
    <property type="entry name" value="PGLYCERATE_KINASE"/>
    <property type="match status" value="1"/>
</dbReference>